<name>WNT2_EULMM</name>
<sequence length="360" mass="40516">MNAPLGGIWLWLPLLLTWLTPEVSSSWWYMRATGGSSRVMCDNVPGLVSRQRQLCHRHPDVMRAISLGVSEWTAECQHQFRQHRWNCNTLDRDHSLFGRVLLRSSRESAFVYAISSAGVVFAITRACSQGELKSCSCDPKKKGTAKDSKGTFDWGGCSDNIDYGIKFARAFVDAKERKGKDARALMNLHNNRAGRKAVKRFLKQECKCHGVSGSCTLRTCWLAMADFRKTGAYLWRKYNGAIQVVMNQDGTGFTVANKRFKKPTKNDLVYFENSPDYCIRDREAGSLGTAGRVCNLTSRGMDSCEVMCCGRGYDTSRVTRMTKCECKFHWCCAVRCQDCLEALDVHTCKAPKNADWATPT</sequence>
<dbReference type="EMBL" id="DP000024">
    <property type="protein sequence ID" value="ABC87442.1"/>
    <property type="molecule type" value="Genomic_DNA"/>
</dbReference>
<dbReference type="SMR" id="Q2IBG1"/>
<dbReference type="GlyCosmos" id="Q2IBG1">
    <property type="glycosylation" value="1 site, No reported glycans"/>
</dbReference>
<dbReference type="GO" id="GO:0005615">
    <property type="term" value="C:extracellular space"/>
    <property type="evidence" value="ECO:0007669"/>
    <property type="project" value="TreeGrafter"/>
</dbReference>
<dbReference type="GO" id="GO:0005125">
    <property type="term" value="F:cytokine activity"/>
    <property type="evidence" value="ECO:0007669"/>
    <property type="project" value="TreeGrafter"/>
</dbReference>
<dbReference type="GO" id="GO:0005109">
    <property type="term" value="F:frizzled binding"/>
    <property type="evidence" value="ECO:0007669"/>
    <property type="project" value="TreeGrafter"/>
</dbReference>
<dbReference type="GO" id="GO:0048513">
    <property type="term" value="P:animal organ development"/>
    <property type="evidence" value="ECO:0007669"/>
    <property type="project" value="UniProtKB-ARBA"/>
</dbReference>
<dbReference type="GO" id="GO:0060070">
    <property type="term" value="P:canonical Wnt signaling pathway"/>
    <property type="evidence" value="ECO:0007669"/>
    <property type="project" value="TreeGrafter"/>
</dbReference>
<dbReference type="GO" id="GO:0045165">
    <property type="term" value="P:cell fate commitment"/>
    <property type="evidence" value="ECO:0007669"/>
    <property type="project" value="TreeGrafter"/>
</dbReference>
<dbReference type="GO" id="GO:0030182">
    <property type="term" value="P:neuron differentiation"/>
    <property type="evidence" value="ECO:0007669"/>
    <property type="project" value="TreeGrafter"/>
</dbReference>
<dbReference type="CDD" id="cd19345">
    <property type="entry name" value="Wnt_Wnt2"/>
    <property type="match status" value="1"/>
</dbReference>
<dbReference type="FunFam" id="3.30.2460.20:FF:000001">
    <property type="entry name" value="Wnt homolog"/>
    <property type="match status" value="1"/>
</dbReference>
<dbReference type="Gene3D" id="3.30.2460.20">
    <property type="match status" value="1"/>
</dbReference>
<dbReference type="InterPro" id="IPR005817">
    <property type="entry name" value="Wnt"/>
</dbReference>
<dbReference type="InterPro" id="IPR009140">
    <property type="entry name" value="Wnt2"/>
</dbReference>
<dbReference type="InterPro" id="IPR043158">
    <property type="entry name" value="Wnt_C"/>
</dbReference>
<dbReference type="InterPro" id="IPR018161">
    <property type="entry name" value="Wnt_CS"/>
</dbReference>
<dbReference type="PANTHER" id="PTHR12027:SF86">
    <property type="entry name" value="PROTEIN WNT-2"/>
    <property type="match status" value="1"/>
</dbReference>
<dbReference type="PANTHER" id="PTHR12027">
    <property type="entry name" value="WNT RELATED"/>
    <property type="match status" value="1"/>
</dbReference>
<dbReference type="Pfam" id="PF00110">
    <property type="entry name" value="wnt"/>
    <property type="match status" value="1"/>
</dbReference>
<dbReference type="PRINTS" id="PR01842">
    <property type="entry name" value="WNT2PROTEIN"/>
</dbReference>
<dbReference type="PRINTS" id="PR01349">
    <property type="entry name" value="WNTPROTEIN"/>
</dbReference>
<dbReference type="SMART" id="SM00097">
    <property type="entry name" value="WNT1"/>
    <property type="match status" value="1"/>
</dbReference>
<dbReference type="PROSITE" id="PS00246">
    <property type="entry name" value="WNT1"/>
    <property type="match status" value="1"/>
</dbReference>
<accession>Q2IBG1</accession>
<evidence type="ECO:0000250" key="1"/>
<evidence type="ECO:0000250" key="2">
    <source>
        <dbReference type="UniProtKB" id="P27467"/>
    </source>
</evidence>
<evidence type="ECO:0000250" key="3">
    <source>
        <dbReference type="UniProtKB" id="P28026"/>
    </source>
</evidence>
<evidence type="ECO:0000250" key="4">
    <source>
        <dbReference type="UniProtKB" id="P56704"/>
    </source>
</evidence>
<evidence type="ECO:0000255" key="5"/>
<evidence type="ECO:0000305" key="6"/>
<organism>
    <name type="scientific">Eulemur macaco macaco</name>
    <name type="common">Black lemur</name>
    <dbReference type="NCBI Taxonomy" id="30603"/>
    <lineage>
        <taxon>Eukaryota</taxon>
        <taxon>Metazoa</taxon>
        <taxon>Chordata</taxon>
        <taxon>Craniata</taxon>
        <taxon>Vertebrata</taxon>
        <taxon>Euteleostomi</taxon>
        <taxon>Mammalia</taxon>
        <taxon>Eutheria</taxon>
        <taxon>Euarchontoglires</taxon>
        <taxon>Primates</taxon>
        <taxon>Strepsirrhini</taxon>
        <taxon>Lemuriformes</taxon>
        <taxon>Lemuridae</taxon>
        <taxon>Eulemur</taxon>
    </lineage>
</organism>
<protein>
    <recommendedName>
        <fullName>Protein Wnt-2</fullName>
    </recommendedName>
</protein>
<reference key="1">
    <citation type="submission" date="2006-01" db="EMBL/GenBank/DDBJ databases">
        <title>NISC comparative sequencing initiative.</title>
        <authorList>
            <person name="Antonellis A."/>
            <person name="Ayele K."/>
            <person name="Benjamin B."/>
            <person name="Blakesley R.W."/>
            <person name="Boakye A."/>
            <person name="Bouffard G.G."/>
            <person name="Brinkley C."/>
            <person name="Brooks S."/>
            <person name="Chu G."/>
            <person name="Coleman H."/>
            <person name="Engle J."/>
            <person name="Gestole M."/>
            <person name="Greene A."/>
            <person name="Guan X."/>
            <person name="Gupta J."/>
            <person name="Haghighi P."/>
            <person name="Han J."/>
            <person name="Hansen N."/>
            <person name="Ho S.-L."/>
            <person name="Hu P."/>
            <person name="Hunter G."/>
            <person name="Hurle B."/>
            <person name="Idol J.R."/>
            <person name="Kwong P."/>
            <person name="Laric P."/>
            <person name="Larson S."/>
            <person name="Lee-Lin S.-Q."/>
            <person name="Legaspi R."/>
            <person name="Madden M."/>
            <person name="Maduro Q.L."/>
            <person name="Maduro V.B."/>
            <person name="Margulies E.H."/>
            <person name="Masiello C."/>
            <person name="Maskeri B."/>
            <person name="McDowell J."/>
            <person name="Mojidi H.A."/>
            <person name="Mullikin J.C."/>
            <person name="Oestreicher J.S."/>
            <person name="Park M."/>
            <person name="Portnoy M.E."/>
            <person name="Prasad A."/>
            <person name="Puri O."/>
            <person name="Reddix-Dugue N."/>
            <person name="Schandler K."/>
            <person name="Schueler M.G."/>
            <person name="Sison C."/>
            <person name="Stantripop S."/>
            <person name="Stephen E."/>
            <person name="Taye A."/>
            <person name="Thomas J.W."/>
            <person name="Thomas P.J."/>
            <person name="Tsipouri V."/>
            <person name="Ung L."/>
            <person name="Vogt J.L."/>
            <person name="Wetherby K.D."/>
            <person name="Young A."/>
            <person name="Green E.D."/>
        </authorList>
    </citation>
    <scope>NUCLEOTIDE SEQUENCE [LARGE SCALE GENOMIC DNA]</scope>
</reference>
<feature type="signal peptide" evidence="5">
    <location>
        <begin position="1"/>
        <end position="26"/>
    </location>
</feature>
<feature type="chain" id="PRO_0000248066" description="Protein Wnt-2">
    <location>
        <begin position="27"/>
        <end position="360"/>
    </location>
</feature>
<feature type="lipid moiety-binding region" description="O-palmitoleoyl serine; by PORCN" evidence="4">
    <location>
        <position position="212"/>
    </location>
</feature>
<feature type="glycosylation site" description="N-linked (GlcNAc...) asparagine" evidence="5">
    <location>
        <position position="295"/>
    </location>
</feature>
<feature type="disulfide bond" evidence="3">
    <location>
        <begin position="76"/>
        <end position="87"/>
    </location>
</feature>
<feature type="disulfide bond" evidence="3">
    <location>
        <begin position="127"/>
        <end position="135"/>
    </location>
</feature>
<feature type="disulfide bond" evidence="3">
    <location>
        <begin position="137"/>
        <end position="157"/>
    </location>
</feature>
<feature type="disulfide bond" evidence="3">
    <location>
        <begin position="206"/>
        <end position="220"/>
    </location>
</feature>
<feature type="disulfide bond" evidence="3">
    <location>
        <begin position="208"/>
        <end position="215"/>
    </location>
</feature>
<feature type="disulfide bond" evidence="3">
    <location>
        <begin position="278"/>
        <end position="309"/>
    </location>
</feature>
<feature type="disulfide bond" evidence="3">
    <location>
        <begin position="294"/>
        <end position="304"/>
    </location>
</feature>
<feature type="disulfide bond" evidence="3">
    <location>
        <begin position="308"/>
        <end position="348"/>
    </location>
</feature>
<feature type="disulfide bond" evidence="3">
    <location>
        <begin position="324"/>
        <end position="339"/>
    </location>
</feature>
<feature type="disulfide bond" evidence="3">
    <location>
        <begin position="326"/>
        <end position="336"/>
    </location>
</feature>
<feature type="disulfide bond" evidence="3">
    <location>
        <begin position="331"/>
        <end position="332"/>
    </location>
</feature>
<keyword id="KW-0217">Developmental protein</keyword>
<keyword id="KW-1015">Disulfide bond</keyword>
<keyword id="KW-0272">Extracellular matrix</keyword>
<keyword id="KW-0325">Glycoprotein</keyword>
<keyword id="KW-0449">Lipoprotein</keyword>
<keyword id="KW-0964">Secreted</keyword>
<keyword id="KW-0732">Signal</keyword>
<keyword id="KW-0879">Wnt signaling pathway</keyword>
<comment type="function">
    <text evidence="1">Ligand for members of the frizzled family of seven transmembrane receptors. Probable developmental protein. May be a signaling molecule which affects the development of discrete regions of tissues. Is likely to signal over only few cell diameters (By similarity).</text>
</comment>
<comment type="subcellular location">
    <subcellularLocation>
        <location evidence="1">Secreted</location>
        <location evidence="1">Extracellular space</location>
        <location evidence="1">Extracellular matrix</location>
    </subcellularLocation>
</comment>
<comment type="PTM">
    <text evidence="2 4">Palmitoleoylation is required for efficient binding to frizzled receptors. Depalmitoleoylation leads to Wnt signaling pathway inhibition.</text>
</comment>
<comment type="similarity">
    <text evidence="6">Belongs to the Wnt family.</text>
</comment>
<proteinExistence type="inferred from homology"/>
<gene>
    <name type="primary">WNT2</name>
</gene>